<comment type="function">
    <text evidence="1">ATP-dependent DNA 3'-5' helicase required for initiation of viral DNA replication. It forms a complex with the viral E2 protein. The E1-E2 complex binds to the replication origin which contains binding sites for both proteins. During the initial step, a dimer of E1 interacts with a dimer of protein E2 leading to a complex that binds the viral origin of replication with high specificity. Then, a second dimer of E1 displaces the E2 dimer in an ATP-dependent manner to form the E1 tetramer. Following this, two E1 monomers are added to each half of the site, which results in the formation of two E1 trimers on the viral ori. Subsequently, two hexamers will be created. The double hexamer acts as a bi-directional helicase machinery and unwinds the viral DNA and then recruits the host DNA polymerase to start replication.</text>
</comment>
<comment type="catalytic activity">
    <reaction evidence="1">
        <text>Couples ATP hydrolysis with the unwinding of duplex DNA by translocating in the 3'-5' direction.</text>
        <dbReference type="EC" id="5.6.2.4"/>
    </reaction>
</comment>
<comment type="catalytic activity">
    <reaction evidence="1">
        <text>ATP + H2O = ADP + phosphate + H(+)</text>
        <dbReference type="Rhea" id="RHEA:13065"/>
        <dbReference type="ChEBI" id="CHEBI:15377"/>
        <dbReference type="ChEBI" id="CHEBI:15378"/>
        <dbReference type="ChEBI" id="CHEBI:30616"/>
        <dbReference type="ChEBI" id="CHEBI:43474"/>
        <dbReference type="ChEBI" id="CHEBI:456216"/>
        <dbReference type="EC" id="5.6.2.4"/>
    </reaction>
</comment>
<comment type="subcellular location">
    <subcellularLocation>
        <location evidence="1">Host nucleus</location>
    </subcellularLocation>
</comment>
<comment type="similarity">
    <text evidence="3">Belongs to the papillomaviridae E1 protein family.</text>
</comment>
<proteinExistence type="inferred from homology"/>
<feature type="chain" id="PRO_0000133096" description="Replication protein E1">
    <location>
        <begin position="1" status="less than"/>
        <end position="152" status="greater than"/>
    </location>
</feature>
<feature type="domain" description="SF3 helicase" evidence="2">
    <location>
        <begin position="23"/>
        <end position="152" status="greater than"/>
    </location>
</feature>
<feature type="binding site" evidence="2">
    <location>
        <begin position="49"/>
        <end position="56"/>
    </location>
    <ligand>
        <name>ATP</name>
        <dbReference type="ChEBI" id="CHEBI:30616"/>
    </ligand>
</feature>
<feature type="non-terminal residue">
    <location>
        <position position="1"/>
    </location>
</feature>
<feature type="non-terminal residue">
    <location>
        <position position="152"/>
    </location>
</feature>
<gene>
    <name type="primary">E1</name>
</gene>
<organism>
    <name type="scientific">Avian papillomavirus fpv-l</name>
    <dbReference type="NCBI Taxonomy" id="10577"/>
    <lineage>
        <taxon>Viruses</taxon>
        <taxon>Monodnaviria</taxon>
        <taxon>Shotokuvirae</taxon>
        <taxon>Cossaviricota</taxon>
        <taxon>Papovaviricetes</taxon>
        <taxon>Zurhausenvirales</taxon>
        <taxon>Papillomaviridae</taxon>
        <taxon>Firstpapillomavirinae</taxon>
        <taxon>Etapapillomavirus</taxon>
    </lineage>
</organism>
<evidence type="ECO:0000250" key="1">
    <source>
        <dbReference type="UniProtKB" id="P03116"/>
    </source>
</evidence>
<evidence type="ECO:0000255" key="2">
    <source>
        <dbReference type="PROSITE-ProRule" id="PRU00551"/>
    </source>
</evidence>
<evidence type="ECO:0000305" key="3"/>
<name>VE1_FPVL</name>
<accession>P06455</accession>
<keyword id="KW-0067">ATP-binding</keyword>
<keyword id="KW-0235">DNA replication</keyword>
<keyword id="KW-0238">DNA-binding</keyword>
<keyword id="KW-0244">Early protein</keyword>
<keyword id="KW-0347">Helicase</keyword>
<keyword id="KW-1048">Host nucleus</keyword>
<keyword id="KW-0378">Hydrolase</keyword>
<keyword id="KW-0413">Isomerase</keyword>
<keyword id="KW-0547">Nucleotide-binding</keyword>
<reference key="1">
    <citation type="journal article" date="1984" name="J. Virol.">
        <title>Genome of an avian papillomavirus.</title>
        <authorList>
            <person name="Moreno-Lopez J."/>
            <person name="Ahola H."/>
            <person name="Stenlund A."/>
            <person name="Osterhaus A."/>
            <person name="Pettersson U."/>
        </authorList>
    </citation>
    <scope>NUCLEOTIDE SEQUENCE [GENOMIC DNA]</scope>
</reference>
<dbReference type="EC" id="5.6.2.4" evidence="1"/>
<dbReference type="EMBL" id="AH002397">
    <property type="protein sequence ID" value="AAA46922.1"/>
    <property type="molecule type" value="Genomic_DNA"/>
</dbReference>
<dbReference type="SMR" id="P06455"/>
<dbReference type="GO" id="GO:0042025">
    <property type="term" value="C:host cell nucleus"/>
    <property type="evidence" value="ECO:0007669"/>
    <property type="project" value="UniProtKB-SubCell"/>
</dbReference>
<dbReference type="GO" id="GO:0005524">
    <property type="term" value="F:ATP binding"/>
    <property type="evidence" value="ECO:0007669"/>
    <property type="project" value="UniProtKB-KW"/>
</dbReference>
<dbReference type="GO" id="GO:0016887">
    <property type="term" value="F:ATP hydrolysis activity"/>
    <property type="evidence" value="ECO:0007669"/>
    <property type="project" value="RHEA"/>
</dbReference>
<dbReference type="GO" id="GO:0003677">
    <property type="term" value="F:DNA binding"/>
    <property type="evidence" value="ECO:0007669"/>
    <property type="project" value="UniProtKB-KW"/>
</dbReference>
<dbReference type="GO" id="GO:0003678">
    <property type="term" value="F:DNA helicase activity"/>
    <property type="evidence" value="ECO:0007669"/>
    <property type="project" value="InterPro"/>
</dbReference>
<dbReference type="GO" id="GO:0006260">
    <property type="term" value="P:DNA replication"/>
    <property type="evidence" value="ECO:0007669"/>
    <property type="project" value="UniProtKB-KW"/>
</dbReference>
<dbReference type="Gene3D" id="3.40.50.300">
    <property type="entry name" value="P-loop containing nucleotide triphosphate hydrolases"/>
    <property type="match status" value="1"/>
</dbReference>
<dbReference type="InterPro" id="IPR014015">
    <property type="entry name" value="Helicase_SF3_DNA-vir"/>
</dbReference>
<dbReference type="InterPro" id="IPR027417">
    <property type="entry name" value="P-loop_NTPase"/>
</dbReference>
<dbReference type="InterPro" id="IPR001177">
    <property type="entry name" value="PPV_DNA_helicase_E1_C"/>
</dbReference>
<dbReference type="Pfam" id="PF00519">
    <property type="entry name" value="PPV_E1_C"/>
    <property type="match status" value="1"/>
</dbReference>
<dbReference type="SUPFAM" id="SSF52540">
    <property type="entry name" value="P-loop containing nucleoside triphosphate hydrolases"/>
    <property type="match status" value="1"/>
</dbReference>
<dbReference type="PROSITE" id="PS51206">
    <property type="entry name" value="SF3_HELICASE_1"/>
    <property type="match status" value="1"/>
</dbReference>
<sequence>YDVESTDEDGWKKILVFLTFQHINFKEFISILCMWLKGRPKKSCITIAGVPDSGKSMFAYSLIKFLNGSVLSFANSKSHFWLQPLTECKAALIDDVTLPCWDYVDTFLRNALDGNAICIDCKHRAPVQTKCPPLLLTSNYDPRLHGVDSGGG</sequence>
<protein>
    <recommendedName>
        <fullName>Replication protein E1</fullName>
        <ecNumber evidence="1">5.6.2.4</ecNumber>
    </recommendedName>
    <alternativeName>
        <fullName>ATP-dependent helicase E1</fullName>
    </alternativeName>
    <alternativeName>
        <fullName evidence="3">DNA 3'-5' helicase E1</fullName>
    </alternativeName>
</protein>
<organismHost>
    <name type="scientific">Aves</name>
    <dbReference type="NCBI Taxonomy" id="8782"/>
</organismHost>